<keyword id="KW-1003">Cell membrane</keyword>
<keyword id="KW-0325">Glycoprotein</keyword>
<keyword id="KW-0472">Membrane</keyword>
<keyword id="KW-0675">Receptor</keyword>
<keyword id="KW-1185">Reference proteome</keyword>
<keyword id="KW-0807">Transducer</keyword>
<keyword id="KW-0812">Transmembrane</keyword>
<keyword id="KW-1133">Transmembrane helix</keyword>
<comment type="function">
    <text evidence="1">Probable gustatory receptor which mediates acceptance or avoidance behavior, depending on its substrates.</text>
</comment>
<comment type="subcellular location">
    <subcellularLocation>
        <location evidence="1">Cell membrane</location>
        <topology evidence="1">Multi-pass membrane protein</topology>
    </subcellularLocation>
</comment>
<comment type="tissue specificity">
    <text evidence="4">In larvae, is expressed in neurons of the terminal external chemosensory organ.</text>
</comment>
<comment type="similarity">
    <text evidence="5">Belongs to the insect chemoreceptor superfamily. Gustatory receptor (GR) family. Gr22e subfamily.</text>
</comment>
<proteinExistence type="evidence at transcript level"/>
<dbReference type="EMBL" id="AE014297">
    <property type="protein sequence ID" value="AAN14097.1"/>
    <property type="molecule type" value="Genomic_DNA"/>
</dbReference>
<dbReference type="RefSeq" id="NP_788747.1">
    <property type="nucleotide sequence ID" value="NM_176570.2"/>
</dbReference>
<dbReference type="SMR" id="Q8IMQ6"/>
<dbReference type="FunCoup" id="Q8IMQ6">
    <property type="interactions" value="7"/>
</dbReference>
<dbReference type="IntAct" id="Q8IMQ6">
    <property type="interactions" value="1"/>
</dbReference>
<dbReference type="STRING" id="7227.FBpp0311437"/>
<dbReference type="GlyCosmos" id="Q8IMQ6">
    <property type="glycosylation" value="2 sites, No reported glycans"/>
</dbReference>
<dbReference type="GlyGen" id="Q8IMQ6">
    <property type="glycosylation" value="2 sites"/>
</dbReference>
<dbReference type="PaxDb" id="7227-FBpp0084453"/>
<dbReference type="EnsemblMetazoa" id="FBtr0085081">
    <property type="protein sequence ID" value="FBpp0084453"/>
    <property type="gene ID" value="FBgn0041224"/>
</dbReference>
<dbReference type="GeneID" id="117338"/>
<dbReference type="KEGG" id="dme:Dmel_CG33083"/>
<dbReference type="AGR" id="FB:FBgn0041224"/>
<dbReference type="CTD" id="117338"/>
<dbReference type="FlyBase" id="FBgn0041224">
    <property type="gene designation" value="Gr97a"/>
</dbReference>
<dbReference type="VEuPathDB" id="VectorBase:FBgn0041224"/>
<dbReference type="eggNOG" id="ENOG502TD1C">
    <property type="taxonomic scope" value="Eukaryota"/>
</dbReference>
<dbReference type="HOGENOM" id="CLU_720168_0_0_1"/>
<dbReference type="InParanoid" id="Q8IMQ6"/>
<dbReference type="OrthoDB" id="7881975at2759"/>
<dbReference type="PhylomeDB" id="Q8IMQ6"/>
<dbReference type="BioGRID-ORCS" id="117338">
    <property type="hits" value="0 hits in 1 CRISPR screen"/>
</dbReference>
<dbReference type="GenomeRNAi" id="117338"/>
<dbReference type="PRO" id="PR:Q8IMQ6"/>
<dbReference type="Proteomes" id="UP000000803">
    <property type="component" value="Chromosome 3R"/>
</dbReference>
<dbReference type="Bgee" id="FBgn0041224">
    <property type="expression patterns" value="Expressed in T neuron T5a (Drosophila) in embryonic/larval optic lobe (Drosophila) and 5 other cell types or tissues"/>
</dbReference>
<dbReference type="ExpressionAtlas" id="Q8IMQ6">
    <property type="expression patterns" value="baseline and differential"/>
</dbReference>
<dbReference type="GO" id="GO:0030424">
    <property type="term" value="C:axon"/>
    <property type="evidence" value="ECO:0000318"/>
    <property type="project" value="GO_Central"/>
</dbReference>
<dbReference type="GO" id="GO:0030425">
    <property type="term" value="C:dendrite"/>
    <property type="evidence" value="ECO:0000318"/>
    <property type="project" value="GO_Central"/>
</dbReference>
<dbReference type="GO" id="GO:0016020">
    <property type="term" value="C:membrane"/>
    <property type="evidence" value="ECO:0000303"/>
    <property type="project" value="UniProtKB"/>
</dbReference>
<dbReference type="GO" id="GO:0043025">
    <property type="term" value="C:neuronal cell body"/>
    <property type="evidence" value="ECO:0000318"/>
    <property type="project" value="GO_Central"/>
</dbReference>
<dbReference type="GO" id="GO:0005886">
    <property type="term" value="C:plasma membrane"/>
    <property type="evidence" value="ECO:0000250"/>
    <property type="project" value="FlyBase"/>
</dbReference>
<dbReference type="GO" id="GO:0015276">
    <property type="term" value="F:ligand-gated monoatomic ion channel activity"/>
    <property type="evidence" value="ECO:0000250"/>
    <property type="project" value="FlyBase"/>
</dbReference>
<dbReference type="GO" id="GO:0034220">
    <property type="term" value="P:monoatomic ion transmembrane transport"/>
    <property type="evidence" value="ECO:0000250"/>
    <property type="project" value="FlyBase"/>
</dbReference>
<dbReference type="GO" id="GO:0050909">
    <property type="term" value="P:sensory perception of taste"/>
    <property type="evidence" value="ECO:0007669"/>
    <property type="project" value="InterPro"/>
</dbReference>
<dbReference type="GO" id="GO:0007165">
    <property type="term" value="P:signal transduction"/>
    <property type="evidence" value="ECO:0007669"/>
    <property type="project" value="UniProtKB-KW"/>
</dbReference>
<dbReference type="InterPro" id="IPR013604">
    <property type="entry name" value="7TM_chemorcpt"/>
</dbReference>
<dbReference type="Pfam" id="PF08395">
    <property type="entry name" value="7tm_7"/>
    <property type="match status" value="1"/>
</dbReference>
<accession>Q8IMQ6</accession>
<evidence type="ECO:0000250" key="1"/>
<evidence type="ECO:0000255" key="2"/>
<evidence type="ECO:0000269" key="3">
    <source>
    </source>
</evidence>
<evidence type="ECO:0000269" key="4">
    <source>
    </source>
</evidence>
<evidence type="ECO:0000305" key="5"/>
<evidence type="ECO:0000312" key="6">
    <source>
        <dbReference type="EMBL" id="AAN14097.1"/>
    </source>
</evidence>
<gene>
    <name type="primary">Gr97a</name>
    <name type="synonym">GR97D.1</name>
    <name type="ORF">CG33083</name>
</gene>
<reference evidence="5" key="1">
    <citation type="journal article" date="2000" name="Science">
        <title>The genome sequence of Drosophila melanogaster.</title>
        <authorList>
            <person name="Adams M.D."/>
            <person name="Celniker S.E."/>
            <person name="Holt R.A."/>
            <person name="Evans C.A."/>
            <person name="Gocayne J.D."/>
            <person name="Amanatides P.G."/>
            <person name="Scherer S.E."/>
            <person name="Li P.W."/>
            <person name="Hoskins R.A."/>
            <person name="Galle R.F."/>
            <person name="George R.A."/>
            <person name="Lewis S.E."/>
            <person name="Richards S."/>
            <person name="Ashburner M."/>
            <person name="Henderson S.N."/>
            <person name="Sutton G.G."/>
            <person name="Wortman J.R."/>
            <person name="Yandell M.D."/>
            <person name="Zhang Q."/>
            <person name="Chen L.X."/>
            <person name="Brandon R.C."/>
            <person name="Rogers Y.-H.C."/>
            <person name="Blazej R.G."/>
            <person name="Champe M."/>
            <person name="Pfeiffer B.D."/>
            <person name="Wan K.H."/>
            <person name="Doyle C."/>
            <person name="Baxter E.G."/>
            <person name="Helt G."/>
            <person name="Nelson C.R."/>
            <person name="Miklos G.L.G."/>
            <person name="Abril J.F."/>
            <person name="Agbayani A."/>
            <person name="An H.-J."/>
            <person name="Andrews-Pfannkoch C."/>
            <person name="Baldwin D."/>
            <person name="Ballew R.M."/>
            <person name="Basu A."/>
            <person name="Baxendale J."/>
            <person name="Bayraktaroglu L."/>
            <person name="Beasley E.M."/>
            <person name="Beeson K.Y."/>
            <person name="Benos P.V."/>
            <person name="Berman B.P."/>
            <person name="Bhandari D."/>
            <person name="Bolshakov S."/>
            <person name="Borkova D."/>
            <person name="Botchan M.R."/>
            <person name="Bouck J."/>
            <person name="Brokstein P."/>
            <person name="Brottier P."/>
            <person name="Burtis K.C."/>
            <person name="Busam D.A."/>
            <person name="Butler H."/>
            <person name="Cadieu E."/>
            <person name="Center A."/>
            <person name="Chandra I."/>
            <person name="Cherry J.M."/>
            <person name="Cawley S."/>
            <person name="Dahlke C."/>
            <person name="Davenport L.B."/>
            <person name="Davies P."/>
            <person name="de Pablos B."/>
            <person name="Delcher A."/>
            <person name="Deng Z."/>
            <person name="Mays A.D."/>
            <person name="Dew I."/>
            <person name="Dietz S.M."/>
            <person name="Dodson K."/>
            <person name="Doup L.E."/>
            <person name="Downes M."/>
            <person name="Dugan-Rocha S."/>
            <person name="Dunkov B.C."/>
            <person name="Dunn P."/>
            <person name="Durbin K.J."/>
            <person name="Evangelista C.C."/>
            <person name="Ferraz C."/>
            <person name="Ferriera S."/>
            <person name="Fleischmann W."/>
            <person name="Fosler C."/>
            <person name="Gabrielian A.E."/>
            <person name="Garg N.S."/>
            <person name="Gelbart W.M."/>
            <person name="Glasser K."/>
            <person name="Glodek A."/>
            <person name="Gong F."/>
            <person name="Gorrell J.H."/>
            <person name="Gu Z."/>
            <person name="Guan P."/>
            <person name="Harris M."/>
            <person name="Harris N.L."/>
            <person name="Harvey D.A."/>
            <person name="Heiman T.J."/>
            <person name="Hernandez J.R."/>
            <person name="Houck J."/>
            <person name="Hostin D."/>
            <person name="Houston K.A."/>
            <person name="Howland T.J."/>
            <person name="Wei M.-H."/>
            <person name="Ibegwam C."/>
            <person name="Jalali M."/>
            <person name="Kalush F."/>
            <person name="Karpen G.H."/>
            <person name="Ke Z."/>
            <person name="Kennison J.A."/>
            <person name="Ketchum K.A."/>
            <person name="Kimmel B.E."/>
            <person name="Kodira C.D."/>
            <person name="Kraft C.L."/>
            <person name="Kravitz S."/>
            <person name="Kulp D."/>
            <person name="Lai Z."/>
            <person name="Lasko P."/>
            <person name="Lei Y."/>
            <person name="Levitsky A.A."/>
            <person name="Li J.H."/>
            <person name="Li Z."/>
            <person name="Liang Y."/>
            <person name="Lin X."/>
            <person name="Liu X."/>
            <person name="Mattei B."/>
            <person name="McIntosh T.C."/>
            <person name="McLeod M.P."/>
            <person name="McPherson D."/>
            <person name="Merkulov G."/>
            <person name="Milshina N.V."/>
            <person name="Mobarry C."/>
            <person name="Morris J."/>
            <person name="Moshrefi A."/>
            <person name="Mount S.M."/>
            <person name="Moy M."/>
            <person name="Murphy B."/>
            <person name="Murphy L."/>
            <person name="Muzny D.M."/>
            <person name="Nelson D.L."/>
            <person name="Nelson D.R."/>
            <person name="Nelson K.A."/>
            <person name="Nixon K."/>
            <person name="Nusskern D.R."/>
            <person name="Pacleb J.M."/>
            <person name="Palazzolo M."/>
            <person name="Pittman G.S."/>
            <person name="Pan S."/>
            <person name="Pollard J."/>
            <person name="Puri V."/>
            <person name="Reese M.G."/>
            <person name="Reinert K."/>
            <person name="Remington K."/>
            <person name="Saunders R.D.C."/>
            <person name="Scheeler F."/>
            <person name="Shen H."/>
            <person name="Shue B.C."/>
            <person name="Siden-Kiamos I."/>
            <person name="Simpson M."/>
            <person name="Skupski M.P."/>
            <person name="Smith T.J."/>
            <person name="Spier E."/>
            <person name="Spradling A.C."/>
            <person name="Stapleton M."/>
            <person name="Strong R."/>
            <person name="Sun E."/>
            <person name="Svirskas R."/>
            <person name="Tector C."/>
            <person name="Turner R."/>
            <person name="Venter E."/>
            <person name="Wang A.H."/>
            <person name="Wang X."/>
            <person name="Wang Z.-Y."/>
            <person name="Wassarman D.A."/>
            <person name="Weinstock G.M."/>
            <person name="Weissenbach J."/>
            <person name="Williams S.M."/>
            <person name="Woodage T."/>
            <person name="Worley K.C."/>
            <person name="Wu D."/>
            <person name="Yang S."/>
            <person name="Yao Q.A."/>
            <person name="Ye J."/>
            <person name="Yeh R.-F."/>
            <person name="Zaveri J.S."/>
            <person name="Zhan M."/>
            <person name="Zhang G."/>
            <person name="Zhao Q."/>
            <person name="Zheng L."/>
            <person name="Zheng X.H."/>
            <person name="Zhong F.N."/>
            <person name="Zhong W."/>
            <person name="Zhou X."/>
            <person name="Zhu S.C."/>
            <person name="Zhu X."/>
            <person name="Smith H.O."/>
            <person name="Gibbs R.A."/>
            <person name="Myers E.W."/>
            <person name="Rubin G.M."/>
            <person name="Venter J.C."/>
        </authorList>
    </citation>
    <scope>NUCLEOTIDE SEQUENCE [LARGE SCALE GENOMIC DNA]</scope>
    <source>
        <strain evidence="3">Berkeley</strain>
    </source>
</reference>
<reference evidence="5" key="2">
    <citation type="journal article" date="2002" name="Genome Biol.">
        <title>Annotation of the Drosophila melanogaster euchromatic genome: a systematic review.</title>
        <authorList>
            <person name="Misra S."/>
            <person name="Crosby M.A."/>
            <person name="Mungall C.J."/>
            <person name="Matthews B.B."/>
            <person name="Campbell K.S."/>
            <person name="Hradecky P."/>
            <person name="Huang Y."/>
            <person name="Kaminker J.S."/>
            <person name="Millburn G.H."/>
            <person name="Prochnik S.E."/>
            <person name="Smith C.D."/>
            <person name="Tupy J.L."/>
            <person name="Whitfield E.J."/>
            <person name="Bayraktaroglu L."/>
            <person name="Berman B.P."/>
            <person name="Bettencourt B.R."/>
            <person name="Celniker S.E."/>
            <person name="de Grey A.D.N.J."/>
            <person name="Drysdale R.A."/>
            <person name="Harris N.L."/>
            <person name="Richter J."/>
            <person name="Russo S."/>
            <person name="Schroeder A.J."/>
            <person name="Shu S.Q."/>
            <person name="Stapleton M."/>
            <person name="Yamada C."/>
            <person name="Ashburner M."/>
            <person name="Gelbart W.M."/>
            <person name="Rubin G.M."/>
            <person name="Lewis S.E."/>
        </authorList>
    </citation>
    <scope>GENOME REANNOTATION</scope>
    <source>
        <strain>Berkeley</strain>
    </source>
</reference>
<reference evidence="5" key="3">
    <citation type="journal article" date="2000" name="Science">
        <title>Candidate taste receptors in Drosophila.</title>
        <authorList>
            <person name="Clyne P.J."/>
            <person name="Warr C.G."/>
            <person name="Carlson J.R."/>
        </authorList>
    </citation>
    <scope>IDENTIFICATION</scope>
</reference>
<reference key="4">
    <citation type="journal article" date="2011" name="J. Neurosci.">
        <title>Molecular and cellular organization of the taste system in the Drosophila larva.</title>
        <authorList>
            <person name="Kwon J.Y."/>
            <person name="Dahanukar A."/>
            <person name="Weiss L.A."/>
            <person name="Carlson J.R."/>
        </authorList>
    </citation>
    <scope>TISSUE SPECIFICITY</scope>
</reference>
<organism evidence="6">
    <name type="scientific">Drosophila melanogaster</name>
    <name type="common">Fruit fly</name>
    <dbReference type="NCBI Taxonomy" id="7227"/>
    <lineage>
        <taxon>Eukaryota</taxon>
        <taxon>Metazoa</taxon>
        <taxon>Ecdysozoa</taxon>
        <taxon>Arthropoda</taxon>
        <taxon>Hexapoda</taxon>
        <taxon>Insecta</taxon>
        <taxon>Pterygota</taxon>
        <taxon>Neoptera</taxon>
        <taxon>Endopterygota</taxon>
        <taxon>Diptera</taxon>
        <taxon>Brachycera</taxon>
        <taxon>Muscomorpha</taxon>
        <taxon>Ephydroidea</taxon>
        <taxon>Drosophilidae</taxon>
        <taxon>Drosophila</taxon>
        <taxon>Sophophora</taxon>
    </lineage>
</organism>
<feature type="chain" id="PRO_0000216545" description="Putative gustatory receptor 97a">
    <location>
        <begin position="1"/>
        <end position="423"/>
    </location>
</feature>
<feature type="topological domain" description="Cytoplasmic" evidence="1">
    <location>
        <begin position="1"/>
        <end position="31"/>
    </location>
</feature>
<feature type="transmembrane region" description="Helical; Name=1" evidence="2">
    <location>
        <begin position="32"/>
        <end position="52"/>
    </location>
</feature>
<feature type="topological domain" description="Extracellular" evidence="1">
    <location>
        <begin position="53"/>
        <end position="65"/>
    </location>
</feature>
<feature type="transmembrane region" description="Helical; Name=2" evidence="2">
    <location>
        <begin position="66"/>
        <end position="86"/>
    </location>
</feature>
<feature type="topological domain" description="Cytoplasmic" evidence="1">
    <location>
        <begin position="87"/>
        <end position="99"/>
    </location>
</feature>
<feature type="transmembrane region" description="Helical; Name=3" evidence="2">
    <location>
        <begin position="100"/>
        <end position="120"/>
    </location>
</feature>
<feature type="topological domain" description="Extracellular" evidence="1">
    <location>
        <begin position="121"/>
        <end position="152"/>
    </location>
</feature>
<feature type="transmembrane region" description="Helical; Name=4" evidence="2">
    <location>
        <begin position="153"/>
        <end position="173"/>
    </location>
</feature>
<feature type="topological domain" description="Cytoplasmic" evidence="1">
    <location>
        <begin position="174"/>
        <end position="200"/>
    </location>
</feature>
<feature type="transmembrane region" description="Helical; Name=5" evidence="2">
    <location>
        <begin position="201"/>
        <end position="221"/>
    </location>
</feature>
<feature type="topological domain" description="Extracellular" evidence="1">
    <location>
        <begin position="222"/>
        <end position="278"/>
    </location>
</feature>
<feature type="transmembrane region" description="Helical; Name=6" evidence="2">
    <location>
        <begin position="279"/>
        <end position="299"/>
    </location>
</feature>
<feature type="topological domain" description="Cytoplasmic" evidence="1">
    <location>
        <begin position="300"/>
        <end position="317"/>
    </location>
</feature>
<feature type="transmembrane region" description="Helical; Name=7" evidence="2">
    <location>
        <begin position="318"/>
        <end position="338"/>
    </location>
</feature>
<feature type="topological domain" description="Extracellular" evidence="1">
    <location>
        <begin position="339"/>
        <end position="423"/>
    </location>
</feature>
<feature type="glycosylation site" description="N-linked (GlcNAc...) asparagine" evidence="2">
    <location>
        <position position="343"/>
    </location>
</feature>
<feature type="glycosylation site" description="N-linked (GlcNAc...) asparagine" evidence="2">
    <location>
        <position position="393"/>
    </location>
</feature>
<name>GR97A_DROME</name>
<sequence>MRFLRRQTRRLRSIWQRSLPVRFRRGKLHTQLVTICLYATVFLNILYGVYLGRFSFRRKKFVFSKGLTIYSLFVATFFALFYIWNIYNEISTGQINLRDTIGIYCYMNVCVCLFNYVTQWEKTLQIIRFQNSVPLFKVLDSLDISAMIVWRAFIYGLLKIVFCPLITYITLILYHRRSISESQWTSVTTTKTMLPLIVSNQINNCFFGGLVLANLIFAAVNRKLHGIVKEANMLQSPVQMNLHKPYYRMRRFCELADLLDELARKYGFTASRSKNYLRFTDWSMVLSMLMNLLGITMGCYNQYLAIADHYINEEPFDLFLAIVLVVFLAVPFLELVMVARISNQTLTRRTGELLQRFDLQHADARFKQVVNAFWLQVVTINYKLMPLGLLELNTSLVNKVFSSAIGSLLILIQSDLTLRFSLK</sequence>
<protein>
    <recommendedName>
        <fullName>Putative gustatory receptor 97a</fullName>
    </recommendedName>
</protein>